<accession>B4TR59</accession>
<keyword id="KW-0067">ATP-binding</keyword>
<keyword id="KW-0436">Ligase</keyword>
<keyword id="KW-0547">Nucleotide-binding</keyword>
<keyword id="KW-0658">Purine biosynthesis</keyword>
<name>PUR7_SALSV</name>
<organism>
    <name type="scientific">Salmonella schwarzengrund (strain CVM19633)</name>
    <dbReference type="NCBI Taxonomy" id="439843"/>
    <lineage>
        <taxon>Bacteria</taxon>
        <taxon>Pseudomonadati</taxon>
        <taxon>Pseudomonadota</taxon>
        <taxon>Gammaproteobacteria</taxon>
        <taxon>Enterobacterales</taxon>
        <taxon>Enterobacteriaceae</taxon>
        <taxon>Salmonella</taxon>
    </lineage>
</organism>
<comment type="catalytic activity">
    <reaction evidence="1">
        <text>5-amino-1-(5-phospho-D-ribosyl)imidazole-4-carboxylate + L-aspartate + ATP = (2S)-2-[5-amino-1-(5-phospho-beta-D-ribosyl)imidazole-4-carboxamido]succinate + ADP + phosphate + 2 H(+)</text>
        <dbReference type="Rhea" id="RHEA:22628"/>
        <dbReference type="ChEBI" id="CHEBI:15378"/>
        <dbReference type="ChEBI" id="CHEBI:29991"/>
        <dbReference type="ChEBI" id="CHEBI:30616"/>
        <dbReference type="ChEBI" id="CHEBI:43474"/>
        <dbReference type="ChEBI" id="CHEBI:58443"/>
        <dbReference type="ChEBI" id="CHEBI:77657"/>
        <dbReference type="ChEBI" id="CHEBI:456216"/>
        <dbReference type="EC" id="6.3.2.6"/>
    </reaction>
</comment>
<comment type="pathway">
    <text evidence="1">Purine metabolism; IMP biosynthesis via de novo pathway; 5-amino-1-(5-phospho-D-ribosyl)imidazole-4-carboxamide from 5-amino-1-(5-phospho-D-ribosyl)imidazole-4-carboxylate: step 1/2.</text>
</comment>
<comment type="similarity">
    <text evidence="1">Belongs to the SAICAR synthetase family.</text>
</comment>
<evidence type="ECO:0000255" key="1">
    <source>
        <dbReference type="HAMAP-Rule" id="MF_00137"/>
    </source>
</evidence>
<feature type="chain" id="PRO_1000096015" description="Phosphoribosylaminoimidazole-succinocarboxamide synthase">
    <location>
        <begin position="1"/>
        <end position="237"/>
    </location>
</feature>
<reference key="1">
    <citation type="journal article" date="2011" name="J. Bacteriol.">
        <title>Comparative genomics of 28 Salmonella enterica isolates: evidence for CRISPR-mediated adaptive sublineage evolution.</title>
        <authorList>
            <person name="Fricke W.F."/>
            <person name="Mammel M.K."/>
            <person name="McDermott P.F."/>
            <person name="Tartera C."/>
            <person name="White D.G."/>
            <person name="Leclerc J.E."/>
            <person name="Ravel J."/>
            <person name="Cebula T.A."/>
        </authorList>
    </citation>
    <scope>NUCLEOTIDE SEQUENCE [LARGE SCALE GENOMIC DNA]</scope>
    <source>
        <strain>CVM19633</strain>
    </source>
</reference>
<dbReference type="EC" id="6.3.2.6" evidence="1"/>
<dbReference type="EMBL" id="CP001127">
    <property type="protein sequence ID" value="ACF92398.1"/>
    <property type="molecule type" value="Genomic_DNA"/>
</dbReference>
<dbReference type="RefSeq" id="WP_001171630.1">
    <property type="nucleotide sequence ID" value="NC_011094.1"/>
</dbReference>
<dbReference type="SMR" id="B4TR59"/>
<dbReference type="KEGG" id="sew:SeSA_A2720"/>
<dbReference type="HOGENOM" id="CLU_061495_2_1_6"/>
<dbReference type="UniPathway" id="UPA00074">
    <property type="reaction ID" value="UER00131"/>
</dbReference>
<dbReference type="Proteomes" id="UP000001865">
    <property type="component" value="Chromosome"/>
</dbReference>
<dbReference type="GO" id="GO:0005829">
    <property type="term" value="C:cytosol"/>
    <property type="evidence" value="ECO:0007669"/>
    <property type="project" value="TreeGrafter"/>
</dbReference>
<dbReference type="GO" id="GO:0005524">
    <property type="term" value="F:ATP binding"/>
    <property type="evidence" value="ECO:0007669"/>
    <property type="project" value="UniProtKB-KW"/>
</dbReference>
<dbReference type="GO" id="GO:0004639">
    <property type="term" value="F:phosphoribosylaminoimidazolesuccinocarboxamide synthase activity"/>
    <property type="evidence" value="ECO:0007669"/>
    <property type="project" value="UniProtKB-UniRule"/>
</dbReference>
<dbReference type="GO" id="GO:0006189">
    <property type="term" value="P:'de novo' IMP biosynthetic process"/>
    <property type="evidence" value="ECO:0007669"/>
    <property type="project" value="UniProtKB-UniRule"/>
</dbReference>
<dbReference type="GO" id="GO:0009236">
    <property type="term" value="P:cobalamin biosynthetic process"/>
    <property type="evidence" value="ECO:0007669"/>
    <property type="project" value="InterPro"/>
</dbReference>
<dbReference type="CDD" id="cd01415">
    <property type="entry name" value="SAICAR_synt_PurC"/>
    <property type="match status" value="1"/>
</dbReference>
<dbReference type="FunFam" id="3.30.200.20:FF:000086">
    <property type="entry name" value="Phosphoribosylaminoimidazole-succinocarboxamide synthase"/>
    <property type="match status" value="1"/>
</dbReference>
<dbReference type="FunFam" id="3.30.470.20:FF:000006">
    <property type="entry name" value="Phosphoribosylaminoimidazole-succinocarboxamide synthase"/>
    <property type="match status" value="1"/>
</dbReference>
<dbReference type="Gene3D" id="3.30.470.20">
    <property type="entry name" value="ATP-grasp fold, B domain"/>
    <property type="match status" value="1"/>
</dbReference>
<dbReference type="Gene3D" id="3.30.200.20">
    <property type="entry name" value="Phosphorylase Kinase, domain 1"/>
    <property type="match status" value="1"/>
</dbReference>
<dbReference type="HAMAP" id="MF_00137">
    <property type="entry name" value="SAICAR_synth"/>
    <property type="match status" value="1"/>
</dbReference>
<dbReference type="InterPro" id="IPR028923">
    <property type="entry name" value="SAICAR_synt/ADE2_N"/>
</dbReference>
<dbReference type="InterPro" id="IPR033934">
    <property type="entry name" value="SAICAR_synt_PurC"/>
</dbReference>
<dbReference type="InterPro" id="IPR001636">
    <property type="entry name" value="SAICAR_synth"/>
</dbReference>
<dbReference type="InterPro" id="IPR050089">
    <property type="entry name" value="SAICAR_synthetase"/>
</dbReference>
<dbReference type="InterPro" id="IPR018236">
    <property type="entry name" value="SAICAR_synthetase_CS"/>
</dbReference>
<dbReference type="NCBIfam" id="TIGR00081">
    <property type="entry name" value="purC"/>
    <property type="match status" value="1"/>
</dbReference>
<dbReference type="PANTHER" id="PTHR43599">
    <property type="entry name" value="MULTIFUNCTIONAL PROTEIN ADE2"/>
    <property type="match status" value="1"/>
</dbReference>
<dbReference type="PANTHER" id="PTHR43599:SF3">
    <property type="entry name" value="SI:DKEY-6E2.2"/>
    <property type="match status" value="1"/>
</dbReference>
<dbReference type="Pfam" id="PF01259">
    <property type="entry name" value="SAICAR_synt"/>
    <property type="match status" value="1"/>
</dbReference>
<dbReference type="SUPFAM" id="SSF56104">
    <property type="entry name" value="SAICAR synthase-like"/>
    <property type="match status" value="1"/>
</dbReference>
<dbReference type="PROSITE" id="PS01057">
    <property type="entry name" value="SAICAR_SYNTHETASE_1"/>
    <property type="match status" value="1"/>
</dbReference>
<dbReference type="PROSITE" id="PS01058">
    <property type="entry name" value="SAICAR_SYNTHETASE_2"/>
    <property type="match status" value="1"/>
</dbReference>
<gene>
    <name evidence="1" type="primary">purC</name>
    <name type="ordered locus">SeSA_A2720</name>
</gene>
<sequence length="237" mass="26908">MQKQAELYRGKAKTVYSTENPDLLVLEFRNDTSAGDGARIEQFDRKGMVNNKFNHFIMTKLAEAGIPTQMERLLSDTECLVKKLEMVPVECVVRNRAAGSLVKRLGVEEGMELNPPIFDLFLKNDALHDPMVNSSYCETFGWVSQENLARMKELTYKANDVLKKLFDDAGLILVDFKLEFGLYKGEVVLGDEFSPDGSRLWDKETLDKMDKDRFRQSLGGLIEAYEAVAHRLGVKLD</sequence>
<proteinExistence type="inferred from homology"/>
<protein>
    <recommendedName>
        <fullName evidence="1">Phosphoribosylaminoimidazole-succinocarboxamide synthase</fullName>
        <ecNumber evidence="1">6.3.2.6</ecNumber>
    </recommendedName>
    <alternativeName>
        <fullName evidence="1">SAICAR synthetase</fullName>
    </alternativeName>
</protein>